<keyword id="KW-0067">ATP-binding</keyword>
<keyword id="KW-0963">Cytoplasm</keyword>
<keyword id="KW-0378">Hydrolase</keyword>
<keyword id="KW-0547">Nucleotide-binding</keyword>
<keyword id="KW-0645">Protease</keyword>
<keyword id="KW-1185">Reference proteome</keyword>
<keyword id="KW-0720">Serine protease</keyword>
<keyword id="KW-0346">Stress response</keyword>
<accession>P47481</accession>
<accession>Q49276</accession>
<feature type="chain" id="PRO_0000076139" description="Lon protease">
    <location>
        <begin position="1"/>
        <end position="795"/>
    </location>
</feature>
<feature type="domain" description="Lon N-terminal" evidence="3">
    <location>
        <begin position="7"/>
        <end position="213"/>
    </location>
</feature>
<feature type="domain" description="Lon proteolytic" evidence="2">
    <location>
        <begin position="615"/>
        <end position="795"/>
    </location>
</feature>
<feature type="active site" evidence="1">
    <location>
        <position position="702"/>
    </location>
</feature>
<feature type="active site" evidence="1">
    <location>
        <position position="745"/>
    </location>
</feature>
<feature type="binding site" evidence="1">
    <location>
        <begin position="379"/>
        <end position="386"/>
    </location>
    <ligand>
        <name>ATP</name>
        <dbReference type="ChEBI" id="CHEBI:30616"/>
    </ligand>
</feature>
<feature type="sequence conflict" description="In Ref. 2; AAD12428." evidence="4" ref="2">
    <original>T</original>
    <variation>S</variation>
    <location>
        <position position="494"/>
    </location>
</feature>
<gene>
    <name evidence="1" type="primary">lon</name>
    <name type="ordered locus">MG239</name>
</gene>
<reference key="1">
    <citation type="journal article" date="1995" name="Science">
        <title>The minimal gene complement of Mycoplasma genitalium.</title>
        <authorList>
            <person name="Fraser C.M."/>
            <person name="Gocayne J.D."/>
            <person name="White O."/>
            <person name="Adams M.D."/>
            <person name="Clayton R.A."/>
            <person name="Fleischmann R.D."/>
            <person name="Bult C.J."/>
            <person name="Kerlavage A.R."/>
            <person name="Sutton G.G."/>
            <person name="Kelley J.M."/>
            <person name="Fritchman J.L."/>
            <person name="Weidman J.F."/>
            <person name="Small K.V."/>
            <person name="Sandusky M."/>
            <person name="Fuhrmann J.L."/>
            <person name="Nguyen D.T."/>
            <person name="Utterback T.R."/>
            <person name="Saudek D.M."/>
            <person name="Phillips C.A."/>
            <person name="Merrick J.M."/>
            <person name="Tomb J.-F."/>
            <person name="Dougherty B.A."/>
            <person name="Bott K.F."/>
            <person name="Hu P.-C."/>
            <person name="Lucier T.S."/>
            <person name="Peterson S.N."/>
            <person name="Smith H.O."/>
            <person name="Hutchison C.A. III"/>
            <person name="Venter J.C."/>
        </authorList>
    </citation>
    <scope>NUCLEOTIDE SEQUENCE [LARGE SCALE GENOMIC DNA]</scope>
    <source>
        <strain>ATCC 33530 / DSM 19775 / NCTC 10195 / G37</strain>
    </source>
</reference>
<reference key="2">
    <citation type="journal article" date="1993" name="J. Bacteriol.">
        <title>A survey of the Mycoplasma genitalium genome by using random sequencing.</title>
        <authorList>
            <person name="Peterson S.N."/>
            <person name="Hu P.-C."/>
            <person name="Bott K.F."/>
            <person name="Hutchison C.A. III"/>
        </authorList>
    </citation>
    <scope>NUCLEOTIDE SEQUENCE [GENOMIC DNA] OF 484-606</scope>
    <source>
        <strain>ATCC 33530 / DSM 19775 / NCTC 10195 / G37</strain>
    </source>
</reference>
<name>LON_MYCGE</name>
<protein>
    <recommendedName>
        <fullName evidence="1">Lon protease</fullName>
        <ecNumber evidence="1">3.4.21.53</ecNumber>
    </recommendedName>
    <alternativeName>
        <fullName evidence="1">ATP-dependent protease La</fullName>
    </alternativeName>
</protein>
<sequence length="795" mass="89988">MPVTKKSQILVVRGQVIFPFVPFSLDVGRPRSRKIIKALKTLKTKRLVLVTQKFTGEQNPEFNDIYHVGTLCEIDEIVDVPGVDSKTVDYRIKGRGLQRVLIEKFSDADINEVSYQLLNSTVKDEANVDRFLQRIFPEKEEIEQLMEGAEKFLELENISKTVNVPKGLKQLDIITFKLANLVPNTESIKQAILEENEIANRLEKIIQAGIEDLQKIQDYGRSKNKETEFDKLDSKITRKINEQLSRQQRDFYLREKLRIIREEIGISSKKEDEVASIRKKLDENPYPEAIKKRILSELEHYENSSSSSQESTLTKTYIDTLLNLPWWQKSKDNSDVKNLIKTLDKNHTGLDKVKERIVEYLAVQLRTQKNKGPIMCLVGPPGVGKSSLAKSIAEALDKKFVKISLGGVHDESEIRGHRKTYLGSMPGRILKGMTRAKVINPLFLLDEIDKMTSSNQGYPSGALLEVLDPELNNKFSDNYVEEDYDLSKVMFIATANYIEDIPEALLDRMEIIELTSYTEQEKIEIAKNHLIKRCLEDADLNSEELKFTDEAISYIIKFYTREAGVRQLERLIQQVVRKYIVAMQKDGIKQETIDVNAVKKYLKKEIFDHTMRDEVSLPGIVNGMAYTPTGGDLLPIEVTHVAGKGELILTGNLKQTMRESANVALGYVKANAERFNINPSLFKKIDINIHVPGGGIPKDGPSAGAALVTAIISSLTGKKVDPTVAMTGEITLRGKVLVIGGVKEKTISAYRGGVTTIFMPEKNERYLDEVPKEIVDKLNIIFVKEYSDIYNKLFS</sequence>
<organism>
    <name type="scientific">Mycoplasma genitalium (strain ATCC 33530 / DSM 19775 / NCTC 10195 / G37)</name>
    <name type="common">Mycoplasmoides genitalium</name>
    <dbReference type="NCBI Taxonomy" id="243273"/>
    <lineage>
        <taxon>Bacteria</taxon>
        <taxon>Bacillati</taxon>
        <taxon>Mycoplasmatota</taxon>
        <taxon>Mycoplasmoidales</taxon>
        <taxon>Mycoplasmoidaceae</taxon>
        <taxon>Mycoplasmoides</taxon>
    </lineage>
</organism>
<evidence type="ECO:0000255" key="1">
    <source>
        <dbReference type="HAMAP-Rule" id="MF_01973"/>
    </source>
</evidence>
<evidence type="ECO:0000255" key="2">
    <source>
        <dbReference type="PROSITE-ProRule" id="PRU01122"/>
    </source>
</evidence>
<evidence type="ECO:0000255" key="3">
    <source>
        <dbReference type="PROSITE-ProRule" id="PRU01123"/>
    </source>
</evidence>
<evidence type="ECO:0000305" key="4"/>
<comment type="function">
    <text evidence="1">ATP-dependent serine protease that mediates the selective degradation of mutant and abnormal proteins as well as certain short-lived regulatory proteins. Required for cellular homeostasis and for survival from DNA damage and developmental changes induced by stress. Degrades polypeptides processively to yield small peptide fragments that are 5 to 10 amino acids long. Binds to DNA in a double-stranded, site-specific manner.</text>
</comment>
<comment type="catalytic activity">
    <reaction evidence="1">
        <text>Hydrolysis of proteins in presence of ATP.</text>
        <dbReference type="EC" id="3.4.21.53"/>
    </reaction>
</comment>
<comment type="subunit">
    <text evidence="1">Homohexamer. Organized in a ring with a central cavity.</text>
</comment>
<comment type="subcellular location">
    <subcellularLocation>
        <location>Cytoplasm</location>
    </subcellularLocation>
</comment>
<comment type="induction">
    <text evidence="1">By heat shock.</text>
</comment>
<comment type="similarity">
    <text evidence="1">Belongs to the peptidase S16 family.</text>
</comment>
<dbReference type="EC" id="3.4.21.53" evidence="1"/>
<dbReference type="EMBL" id="L43967">
    <property type="protein sequence ID" value="AAC71460.1"/>
    <property type="molecule type" value="Genomic_DNA"/>
</dbReference>
<dbReference type="EMBL" id="U02148">
    <property type="protein sequence ID" value="AAD12428.1"/>
    <property type="molecule type" value="Genomic_DNA"/>
</dbReference>
<dbReference type="PIR" id="D64226">
    <property type="entry name" value="D64226"/>
</dbReference>
<dbReference type="RefSeq" id="WP_009885776.1">
    <property type="nucleotide sequence ID" value="NC_000908.2"/>
</dbReference>
<dbReference type="SMR" id="P47481"/>
<dbReference type="FunCoup" id="P47481">
    <property type="interactions" value="178"/>
</dbReference>
<dbReference type="STRING" id="243273.MG_239"/>
<dbReference type="MEROPS" id="S16.004"/>
<dbReference type="GeneID" id="88282385"/>
<dbReference type="KEGG" id="mge:MG_239"/>
<dbReference type="eggNOG" id="COG0466">
    <property type="taxonomic scope" value="Bacteria"/>
</dbReference>
<dbReference type="HOGENOM" id="CLU_004109_4_3_14"/>
<dbReference type="InParanoid" id="P47481"/>
<dbReference type="OrthoDB" id="9803599at2"/>
<dbReference type="BioCyc" id="MGEN243273:G1GJ2-286-MONOMER"/>
<dbReference type="Proteomes" id="UP000000807">
    <property type="component" value="Chromosome"/>
</dbReference>
<dbReference type="GO" id="GO:0005737">
    <property type="term" value="C:cytoplasm"/>
    <property type="evidence" value="ECO:0007669"/>
    <property type="project" value="UniProtKB-SubCell"/>
</dbReference>
<dbReference type="GO" id="GO:0005524">
    <property type="term" value="F:ATP binding"/>
    <property type="evidence" value="ECO:0007669"/>
    <property type="project" value="UniProtKB-UniRule"/>
</dbReference>
<dbReference type="GO" id="GO:0016887">
    <property type="term" value="F:ATP hydrolysis activity"/>
    <property type="evidence" value="ECO:0007669"/>
    <property type="project" value="UniProtKB-UniRule"/>
</dbReference>
<dbReference type="GO" id="GO:0004176">
    <property type="term" value="F:ATP-dependent peptidase activity"/>
    <property type="evidence" value="ECO:0007669"/>
    <property type="project" value="UniProtKB-UniRule"/>
</dbReference>
<dbReference type="GO" id="GO:0043565">
    <property type="term" value="F:sequence-specific DNA binding"/>
    <property type="evidence" value="ECO:0007669"/>
    <property type="project" value="UniProtKB-UniRule"/>
</dbReference>
<dbReference type="GO" id="GO:0004252">
    <property type="term" value="F:serine-type endopeptidase activity"/>
    <property type="evidence" value="ECO:0007669"/>
    <property type="project" value="UniProtKB-UniRule"/>
</dbReference>
<dbReference type="GO" id="GO:0034605">
    <property type="term" value="P:cellular response to heat"/>
    <property type="evidence" value="ECO:0007669"/>
    <property type="project" value="UniProtKB-UniRule"/>
</dbReference>
<dbReference type="GO" id="GO:0006515">
    <property type="term" value="P:protein quality control for misfolded or incompletely synthesized proteins"/>
    <property type="evidence" value="ECO:0007669"/>
    <property type="project" value="UniProtKB-UniRule"/>
</dbReference>
<dbReference type="CDD" id="cd19500">
    <property type="entry name" value="RecA-like_Lon"/>
    <property type="match status" value="1"/>
</dbReference>
<dbReference type="FunFam" id="3.40.50.300:FF:000021">
    <property type="entry name" value="Lon protease homolog"/>
    <property type="match status" value="1"/>
</dbReference>
<dbReference type="Gene3D" id="1.10.8.60">
    <property type="match status" value="1"/>
</dbReference>
<dbReference type="Gene3D" id="1.20.5.5270">
    <property type="match status" value="1"/>
</dbReference>
<dbReference type="Gene3D" id="1.20.58.1480">
    <property type="match status" value="1"/>
</dbReference>
<dbReference type="Gene3D" id="3.30.230.10">
    <property type="match status" value="1"/>
</dbReference>
<dbReference type="Gene3D" id="2.30.130.40">
    <property type="entry name" value="LON domain-like"/>
    <property type="match status" value="1"/>
</dbReference>
<dbReference type="Gene3D" id="3.40.50.300">
    <property type="entry name" value="P-loop containing nucleotide triphosphate hydrolases"/>
    <property type="match status" value="1"/>
</dbReference>
<dbReference type="HAMAP" id="MF_01973">
    <property type="entry name" value="lon_bact"/>
    <property type="match status" value="1"/>
</dbReference>
<dbReference type="InterPro" id="IPR003593">
    <property type="entry name" value="AAA+_ATPase"/>
</dbReference>
<dbReference type="InterPro" id="IPR003959">
    <property type="entry name" value="ATPase_AAA_core"/>
</dbReference>
<dbReference type="InterPro" id="IPR027543">
    <property type="entry name" value="Lon_bac"/>
</dbReference>
<dbReference type="InterPro" id="IPR004815">
    <property type="entry name" value="Lon_bac/euk-typ"/>
</dbReference>
<dbReference type="InterPro" id="IPR054594">
    <property type="entry name" value="Lon_lid"/>
</dbReference>
<dbReference type="InterPro" id="IPR008269">
    <property type="entry name" value="Lon_proteolytic"/>
</dbReference>
<dbReference type="InterPro" id="IPR027065">
    <property type="entry name" value="Lon_Prtase"/>
</dbReference>
<dbReference type="InterPro" id="IPR003111">
    <property type="entry name" value="Lon_prtase_N"/>
</dbReference>
<dbReference type="InterPro" id="IPR046336">
    <property type="entry name" value="Lon_prtase_N_sf"/>
</dbReference>
<dbReference type="InterPro" id="IPR027417">
    <property type="entry name" value="P-loop_NTPase"/>
</dbReference>
<dbReference type="InterPro" id="IPR008268">
    <property type="entry name" value="Peptidase_S16_AS"/>
</dbReference>
<dbReference type="InterPro" id="IPR015947">
    <property type="entry name" value="PUA-like_sf"/>
</dbReference>
<dbReference type="InterPro" id="IPR020568">
    <property type="entry name" value="Ribosomal_Su5_D2-typ_SF"/>
</dbReference>
<dbReference type="InterPro" id="IPR014721">
    <property type="entry name" value="Ribsml_uS5_D2-typ_fold_subgr"/>
</dbReference>
<dbReference type="NCBIfam" id="TIGR00763">
    <property type="entry name" value="lon"/>
    <property type="match status" value="1"/>
</dbReference>
<dbReference type="PANTHER" id="PTHR10046">
    <property type="entry name" value="ATP DEPENDENT LON PROTEASE FAMILY MEMBER"/>
    <property type="match status" value="1"/>
</dbReference>
<dbReference type="Pfam" id="PF00004">
    <property type="entry name" value="AAA"/>
    <property type="match status" value="1"/>
</dbReference>
<dbReference type="Pfam" id="PF05362">
    <property type="entry name" value="Lon_C"/>
    <property type="match status" value="1"/>
</dbReference>
<dbReference type="Pfam" id="PF22667">
    <property type="entry name" value="Lon_lid"/>
    <property type="match status" value="1"/>
</dbReference>
<dbReference type="Pfam" id="PF02190">
    <property type="entry name" value="LON_substr_bdg"/>
    <property type="match status" value="1"/>
</dbReference>
<dbReference type="PIRSF" id="PIRSF001174">
    <property type="entry name" value="Lon_proteas"/>
    <property type="match status" value="1"/>
</dbReference>
<dbReference type="PRINTS" id="PR00830">
    <property type="entry name" value="ENDOLAPTASE"/>
</dbReference>
<dbReference type="SMART" id="SM00382">
    <property type="entry name" value="AAA"/>
    <property type="match status" value="1"/>
</dbReference>
<dbReference type="SMART" id="SM00464">
    <property type="entry name" value="LON"/>
    <property type="match status" value="1"/>
</dbReference>
<dbReference type="SUPFAM" id="SSF52540">
    <property type="entry name" value="P-loop containing nucleoside triphosphate hydrolases"/>
    <property type="match status" value="1"/>
</dbReference>
<dbReference type="SUPFAM" id="SSF88697">
    <property type="entry name" value="PUA domain-like"/>
    <property type="match status" value="1"/>
</dbReference>
<dbReference type="SUPFAM" id="SSF54211">
    <property type="entry name" value="Ribosomal protein S5 domain 2-like"/>
    <property type="match status" value="1"/>
</dbReference>
<dbReference type="PROSITE" id="PS51787">
    <property type="entry name" value="LON_N"/>
    <property type="match status" value="1"/>
</dbReference>
<dbReference type="PROSITE" id="PS51786">
    <property type="entry name" value="LON_PROTEOLYTIC"/>
    <property type="match status" value="1"/>
</dbReference>
<dbReference type="PROSITE" id="PS01046">
    <property type="entry name" value="LON_SER"/>
    <property type="match status" value="1"/>
</dbReference>
<proteinExistence type="inferred from homology"/>